<evidence type="ECO:0000255" key="1"/>
<evidence type="ECO:0000269" key="2">
    <source>
    </source>
</evidence>
<evidence type="ECO:0000269" key="3">
    <source>
    </source>
</evidence>
<evidence type="ECO:0000269" key="4">
    <source>
    </source>
</evidence>
<evidence type="ECO:0000269" key="5">
    <source>
    </source>
</evidence>
<evidence type="ECO:0000269" key="6">
    <source>
    </source>
</evidence>
<evidence type="ECO:0000269" key="7">
    <source>
    </source>
</evidence>
<evidence type="ECO:0000269" key="8">
    <source>
    </source>
</evidence>
<evidence type="ECO:0000269" key="9">
    <source>
    </source>
</evidence>
<evidence type="ECO:0000269" key="10">
    <source>
    </source>
</evidence>
<evidence type="ECO:0000269" key="11">
    <source>
    </source>
</evidence>
<evidence type="ECO:0000305" key="12"/>
<evidence type="ECO:0007744" key="13">
    <source>
        <dbReference type="PDB" id="2VDY"/>
    </source>
</evidence>
<evidence type="ECO:0007829" key="14">
    <source>
        <dbReference type="PDB" id="2VDX"/>
    </source>
</evidence>
<evidence type="ECO:0007829" key="15">
    <source>
        <dbReference type="PDB" id="4BB2"/>
    </source>
</evidence>
<evidence type="ECO:0007829" key="16">
    <source>
        <dbReference type="PDB" id="4C41"/>
    </source>
</evidence>
<evidence type="ECO:0007829" key="17">
    <source>
        <dbReference type="PDB" id="4C49"/>
    </source>
</evidence>
<name>CBG_HUMAN</name>
<organism>
    <name type="scientific">Homo sapiens</name>
    <name type="common">Human</name>
    <dbReference type="NCBI Taxonomy" id="9606"/>
    <lineage>
        <taxon>Eukaryota</taxon>
        <taxon>Metazoa</taxon>
        <taxon>Chordata</taxon>
        <taxon>Craniata</taxon>
        <taxon>Vertebrata</taxon>
        <taxon>Euteleostomi</taxon>
        <taxon>Mammalia</taxon>
        <taxon>Eutheria</taxon>
        <taxon>Euarchontoglires</taxon>
        <taxon>Primates</taxon>
        <taxon>Haplorrhini</taxon>
        <taxon>Catarrhini</taxon>
        <taxon>Hominidae</taxon>
        <taxon>Homo</taxon>
    </lineage>
</organism>
<comment type="function">
    <text evidence="8">Major transport protein for glucocorticoids and progestins in the blood of almost all vertebrate species.</text>
</comment>
<comment type="subcellular location">
    <subcellularLocation>
        <location>Secreted</location>
    </subcellularLocation>
</comment>
<comment type="tissue specificity">
    <text>Plasma; synthesized in liver. Has also been identified in a number of glycocorticoid responsive cells.</text>
</comment>
<comment type="domain">
    <text evidence="8">Proteolytic cleavage leads to an important conformation change. This reduces the affinity for steroids.</text>
</comment>
<comment type="PTM">
    <text>N-glycosylated; binds 5 oligosaccharide chains.</text>
</comment>
<comment type="PTM">
    <text>Glycosylation in position Asn-260 is needed for steroid binding.</text>
</comment>
<comment type="disease" evidence="2 4 7 11">
    <disease id="DI-01433">
        <name>Corticosteroid-binding globulin deficiency</name>
        <acronym>CBG deficiency</acronym>
        <description>Extremely rare hereditary disorder characterized by reduced corticosteroid-binding capacity with normal or low plasma corticosteroid-binding globulin concentration, and normal or low basal cortisol levels associated with hypo/hypertension and muscle fatigue.</description>
        <dbReference type="MIM" id="611489"/>
    </disease>
    <text>The disease is caused by variants affecting the gene represented in this entry.</text>
</comment>
<comment type="similarity">
    <text evidence="12">Belongs to the serpin family.</text>
</comment>
<comment type="online information" name="Wikipedia">
    <link uri="https://en.wikipedia.org/wiki/Transcortin"/>
    <text>Transcortin entry</text>
</comment>
<dbReference type="EMBL" id="J02943">
    <property type="protein sequence ID" value="AAB59523.1"/>
    <property type="molecule type" value="mRNA"/>
</dbReference>
<dbReference type="EMBL" id="AK290821">
    <property type="protein sequence ID" value="BAF83510.1"/>
    <property type="molecule type" value="mRNA"/>
</dbReference>
<dbReference type="EMBL" id="CH471061">
    <property type="protein sequence ID" value="EAW81568.1"/>
    <property type="molecule type" value="Genomic_DNA"/>
</dbReference>
<dbReference type="EMBL" id="BC056259">
    <property type="protein sequence ID" value="AAH56259.1"/>
    <property type="molecule type" value="mRNA"/>
</dbReference>
<dbReference type="EMBL" id="BC058021">
    <property type="protein sequence ID" value="AAH58021.1"/>
    <property type="molecule type" value="mRNA"/>
</dbReference>
<dbReference type="CCDS" id="CCDS9924.1"/>
<dbReference type="PIR" id="A28321">
    <property type="entry name" value="A28321"/>
</dbReference>
<dbReference type="RefSeq" id="NP_001747.3">
    <property type="nucleotide sequence ID" value="NM_001756.4"/>
</dbReference>
<dbReference type="PDB" id="2VDX">
    <property type="method" value="X-ray"/>
    <property type="resolution" value="1.84 A"/>
    <property type="chains" value="A/B=33-357, A/B=372-405"/>
</dbReference>
<dbReference type="PDB" id="2VDY">
    <property type="method" value="X-ray"/>
    <property type="resolution" value="2.30 A"/>
    <property type="chains" value="A/B=33-405"/>
</dbReference>
<dbReference type="PDB" id="4BB2">
    <property type="method" value="X-ray"/>
    <property type="resolution" value="2.48 A"/>
    <property type="chains" value="A=33-371, B=372-405"/>
</dbReference>
<dbReference type="PDB" id="4C41">
    <property type="method" value="X-ray"/>
    <property type="resolution" value="1.80 A"/>
    <property type="chains" value="A=33-405"/>
</dbReference>
<dbReference type="PDB" id="4C49">
    <property type="method" value="X-ray"/>
    <property type="resolution" value="2.70 A"/>
    <property type="chains" value="A/B/C/D=33-405"/>
</dbReference>
<dbReference type="PDBsum" id="2VDX"/>
<dbReference type="PDBsum" id="2VDY"/>
<dbReference type="PDBsum" id="4BB2"/>
<dbReference type="PDBsum" id="4C41"/>
<dbReference type="PDBsum" id="4C49"/>
<dbReference type="SMR" id="P08185"/>
<dbReference type="BioGRID" id="107314">
    <property type="interactions" value="14"/>
</dbReference>
<dbReference type="FunCoup" id="P08185">
    <property type="interactions" value="116"/>
</dbReference>
<dbReference type="IntAct" id="P08185">
    <property type="interactions" value="8"/>
</dbReference>
<dbReference type="STRING" id="9606.ENSP00000342850"/>
<dbReference type="BindingDB" id="P08185"/>
<dbReference type="ChEMBL" id="CHEMBL2421"/>
<dbReference type="DrugBank" id="DB00240">
    <property type="generic name" value="Alclometasone"/>
</dbReference>
<dbReference type="DrugBank" id="DB00394">
    <property type="generic name" value="Beclomethasone dipropionate"/>
</dbReference>
<dbReference type="DrugBank" id="DB00443">
    <property type="generic name" value="Betamethasone"/>
</dbReference>
<dbReference type="DrugBank" id="DB14669">
    <property type="generic name" value="Betamethasone phosphate"/>
</dbReference>
<dbReference type="DrugBank" id="DB01222">
    <property type="generic name" value="Budesonide"/>
</dbReference>
<dbReference type="DrugBank" id="DB01410">
    <property type="generic name" value="Ciclesonide"/>
</dbReference>
<dbReference type="DrugBank" id="DB01013">
    <property type="generic name" value="Clobetasol propionate"/>
</dbReference>
<dbReference type="DrugBank" id="DB09130">
    <property type="generic name" value="Copper"/>
</dbReference>
<dbReference type="DrugBank" id="DB01380">
    <property type="generic name" value="Cortisone acetate"/>
</dbReference>
<dbReference type="DrugBank" id="DB05688">
    <property type="generic name" value="CRx-119"/>
</dbReference>
<dbReference type="DrugBank" id="DB00687">
    <property type="generic name" value="Fludrocortisone"/>
</dbReference>
<dbReference type="DrugBank" id="DB00663">
    <property type="generic name" value="Flumethasone"/>
</dbReference>
<dbReference type="DrugBank" id="DB00180">
    <property type="generic name" value="Flunisolide"/>
</dbReference>
<dbReference type="DrugBank" id="DB00591">
    <property type="generic name" value="Fluocinolone acetonide"/>
</dbReference>
<dbReference type="DrugBank" id="DB01047">
    <property type="generic name" value="Fluocinonide"/>
</dbReference>
<dbReference type="DrugBank" id="DB00324">
    <property type="generic name" value="Fluorometholone"/>
</dbReference>
<dbReference type="DrugBank" id="DB00846">
    <property type="generic name" value="Flurandrenolide"/>
</dbReference>
<dbReference type="DrugBank" id="DB13867">
    <property type="generic name" value="Fluticasone"/>
</dbReference>
<dbReference type="DrugBank" id="DB08906">
    <property type="generic name" value="Fluticasone furoate"/>
</dbReference>
<dbReference type="DrugBank" id="DB00588">
    <property type="generic name" value="Fluticasone propionate"/>
</dbReference>
<dbReference type="DrugBank" id="DB00741">
    <property type="generic name" value="Hydrocortisone"/>
</dbReference>
<dbReference type="DrugBank" id="DB14538">
    <property type="generic name" value="Hydrocortisone aceponate"/>
</dbReference>
<dbReference type="DrugBank" id="DB14539">
    <property type="generic name" value="Hydrocortisone acetate"/>
</dbReference>
<dbReference type="DrugBank" id="DB14540">
    <property type="generic name" value="Hydrocortisone butyrate"/>
</dbReference>
<dbReference type="DrugBank" id="DB14541">
    <property type="generic name" value="Hydrocortisone cypionate"/>
</dbReference>
<dbReference type="DrugBank" id="DB14542">
    <property type="generic name" value="Hydrocortisone phosphate"/>
</dbReference>
<dbReference type="DrugBank" id="DB14543">
    <property type="generic name" value="Hydrocortisone probutate"/>
</dbReference>
<dbReference type="DrugBank" id="DB14544">
    <property type="generic name" value="Hydrocortisone valerate"/>
</dbReference>
<dbReference type="DrugBank" id="DB09124">
    <property type="generic name" value="Medrogestone"/>
</dbReference>
<dbReference type="DrugBank" id="DB00253">
    <property type="generic name" value="Medrysone"/>
</dbReference>
<dbReference type="DrugBank" id="DB00648">
    <property type="generic name" value="Mitotane"/>
</dbReference>
<dbReference type="DrugBank" id="DB01384">
    <property type="generic name" value="Paramethasone"/>
</dbReference>
<dbReference type="DrugBank" id="DB00860">
    <property type="generic name" value="Prednisolone"/>
</dbReference>
<dbReference type="DrugBank" id="DB15566">
    <property type="generic name" value="Prednisolone acetate"/>
</dbReference>
<dbReference type="DrugBank" id="DB14631">
    <property type="generic name" value="Prednisolone phosphate"/>
</dbReference>
<dbReference type="DrugBank" id="DB00635">
    <property type="generic name" value="Prednisone"/>
</dbReference>
<dbReference type="DrugBank" id="DB00896">
    <property type="generic name" value="Rimexolone"/>
</dbReference>
<dbReference type="DrugBank" id="DB00620">
    <property type="generic name" value="Triamcinolone"/>
</dbReference>
<dbReference type="DrugBank" id="DB00596">
    <property type="generic name" value="Ulobetasol"/>
</dbReference>
<dbReference type="DrugBank" id="DB01593">
    <property type="generic name" value="Zinc"/>
</dbReference>
<dbReference type="DrugBank" id="DB14487">
    <property type="generic name" value="Zinc acetate"/>
</dbReference>
<dbReference type="DrugBank" id="DB14533">
    <property type="generic name" value="Zinc chloride"/>
</dbReference>
<dbReference type="DrugBank" id="DB14548">
    <property type="generic name" value="Zinc sulfate, unspecified form"/>
</dbReference>
<dbReference type="DrugCentral" id="P08185"/>
<dbReference type="MEROPS" id="I04.954"/>
<dbReference type="GlyConnect" id="788">
    <property type="glycosylation" value="20 N-Linked glycans (5 sites)"/>
</dbReference>
<dbReference type="GlyCosmos" id="P08185">
    <property type="glycosylation" value="7 sites, 33 glycans"/>
</dbReference>
<dbReference type="GlyGen" id="P08185">
    <property type="glycosylation" value="8 sites, 76 N-linked glycans (5 sites), 3 O-linked glycans (2 sites)"/>
</dbReference>
<dbReference type="iPTMnet" id="P08185"/>
<dbReference type="PhosphoSitePlus" id="P08185"/>
<dbReference type="BioMuta" id="SERPINA6"/>
<dbReference type="DMDM" id="115851"/>
<dbReference type="CPTAC" id="CPTAC-717"/>
<dbReference type="CPTAC" id="non-CPTAC-2661"/>
<dbReference type="CPTAC" id="non-CPTAC-2662"/>
<dbReference type="jPOST" id="P08185"/>
<dbReference type="MassIVE" id="P08185"/>
<dbReference type="PaxDb" id="9606-ENSP00000342850"/>
<dbReference type="PeptideAtlas" id="P08185"/>
<dbReference type="ProteomicsDB" id="52081"/>
<dbReference type="ABCD" id="P08185">
    <property type="antibodies" value="1 sequenced antibody"/>
</dbReference>
<dbReference type="Antibodypedia" id="59">
    <property type="antibodies" value="513 antibodies from 40 providers"/>
</dbReference>
<dbReference type="CPTC" id="P08185">
    <property type="antibodies" value="1 antibody"/>
</dbReference>
<dbReference type="DNASU" id="866"/>
<dbReference type="Ensembl" id="ENST00000341584.4">
    <property type="protein sequence ID" value="ENSP00000342850.3"/>
    <property type="gene ID" value="ENSG00000170099.6"/>
</dbReference>
<dbReference type="Ensembl" id="ENST00000621384.2">
    <property type="protein sequence ID" value="ENSP00000484501.1"/>
    <property type="gene ID" value="ENSG00000277405.2"/>
</dbReference>
<dbReference type="GeneID" id="866"/>
<dbReference type="KEGG" id="hsa:866"/>
<dbReference type="MANE-Select" id="ENST00000341584.4">
    <property type="protein sequence ID" value="ENSP00000342850.3"/>
    <property type="RefSeq nucleotide sequence ID" value="NM_001756.4"/>
    <property type="RefSeq protein sequence ID" value="NP_001747.3"/>
</dbReference>
<dbReference type="UCSC" id="uc001ycv.4">
    <property type="organism name" value="human"/>
</dbReference>
<dbReference type="AGR" id="HGNC:1540"/>
<dbReference type="CTD" id="866"/>
<dbReference type="DisGeNET" id="866"/>
<dbReference type="GeneCards" id="SERPINA6"/>
<dbReference type="HGNC" id="HGNC:1540">
    <property type="gene designation" value="SERPINA6"/>
</dbReference>
<dbReference type="HPA" id="ENSG00000170099">
    <property type="expression patterns" value="Tissue enriched (liver)"/>
</dbReference>
<dbReference type="MalaCards" id="SERPINA6"/>
<dbReference type="MIM" id="122500">
    <property type="type" value="gene"/>
</dbReference>
<dbReference type="MIM" id="611489">
    <property type="type" value="phenotype"/>
</dbReference>
<dbReference type="neXtProt" id="NX_P08185"/>
<dbReference type="OpenTargets" id="ENSG00000170099"/>
<dbReference type="Orphanet" id="199247">
    <property type="disease" value="Corticosteroid-binding globulin deficiency"/>
</dbReference>
<dbReference type="PharmGKB" id="PA35033"/>
<dbReference type="VEuPathDB" id="HostDB:ENSG00000170099"/>
<dbReference type="eggNOG" id="KOG2392">
    <property type="taxonomic scope" value="Eukaryota"/>
</dbReference>
<dbReference type="GeneTree" id="ENSGT00940000161611"/>
<dbReference type="HOGENOM" id="CLU_023330_2_1_1"/>
<dbReference type="InParanoid" id="P08185"/>
<dbReference type="OMA" id="HDSELPC"/>
<dbReference type="OrthoDB" id="671595at2759"/>
<dbReference type="PAN-GO" id="P08185">
    <property type="GO annotations" value="3 GO annotations based on evolutionary models"/>
</dbReference>
<dbReference type="PhylomeDB" id="P08185"/>
<dbReference type="TreeFam" id="TF343201"/>
<dbReference type="PathwayCommons" id="P08185"/>
<dbReference type="Reactome" id="R-HSA-194002">
    <property type="pathway name" value="Glucocorticoid biosynthesis"/>
</dbReference>
<dbReference type="Reactome" id="R-HSA-9757110">
    <property type="pathway name" value="Prednisone ADME"/>
</dbReference>
<dbReference type="SignaLink" id="P08185"/>
<dbReference type="BioGRID-ORCS" id="866">
    <property type="hits" value="9 hits in 1148 CRISPR screens"/>
</dbReference>
<dbReference type="ChiTaRS" id="SERPINA6">
    <property type="organism name" value="human"/>
</dbReference>
<dbReference type="EvolutionaryTrace" id="P08185"/>
<dbReference type="GeneWiki" id="Transcortin"/>
<dbReference type="GenomeRNAi" id="866"/>
<dbReference type="Pharos" id="P08185">
    <property type="development level" value="Tchem"/>
</dbReference>
<dbReference type="PRO" id="PR:P08185"/>
<dbReference type="Proteomes" id="UP000005640">
    <property type="component" value="Chromosome 14"/>
</dbReference>
<dbReference type="RNAct" id="P08185">
    <property type="molecule type" value="protein"/>
</dbReference>
<dbReference type="Bgee" id="ENSG00000170099">
    <property type="expression patterns" value="Expressed in liver and 46 other cell types or tissues"/>
</dbReference>
<dbReference type="ExpressionAtlas" id="P08185">
    <property type="expression patterns" value="baseline and differential"/>
</dbReference>
<dbReference type="GO" id="GO:0070062">
    <property type="term" value="C:extracellular exosome"/>
    <property type="evidence" value="ECO:0007005"/>
    <property type="project" value="UniProtKB"/>
</dbReference>
<dbReference type="GO" id="GO:0005576">
    <property type="term" value="C:extracellular region"/>
    <property type="evidence" value="ECO:0000304"/>
    <property type="project" value="Reactome"/>
</dbReference>
<dbReference type="GO" id="GO:0005615">
    <property type="term" value="C:extracellular space"/>
    <property type="evidence" value="ECO:0007005"/>
    <property type="project" value="UniProtKB"/>
</dbReference>
<dbReference type="GO" id="GO:0140104">
    <property type="term" value="F:molecular carrier activity"/>
    <property type="evidence" value="ECO:0000269"/>
    <property type="project" value="Reactome"/>
</dbReference>
<dbReference type="GO" id="GO:0004867">
    <property type="term" value="F:serine-type endopeptidase inhibitor activity"/>
    <property type="evidence" value="ECO:0000318"/>
    <property type="project" value="GO_Central"/>
</dbReference>
<dbReference type="GO" id="GO:0005496">
    <property type="term" value="F:steroid binding"/>
    <property type="evidence" value="ECO:0000314"/>
    <property type="project" value="UniProtKB"/>
</dbReference>
<dbReference type="GO" id="GO:0006704">
    <property type="term" value="P:glucocorticoid biosynthetic process"/>
    <property type="evidence" value="ECO:0000304"/>
    <property type="project" value="Reactome"/>
</dbReference>
<dbReference type="CDD" id="cd19554">
    <property type="entry name" value="serpinA6_CBG"/>
    <property type="match status" value="1"/>
</dbReference>
<dbReference type="FunFam" id="3.30.497.10:FF:000001">
    <property type="entry name" value="Serine protease inhibitor"/>
    <property type="match status" value="1"/>
</dbReference>
<dbReference type="FunFam" id="2.30.39.10:FF:000002">
    <property type="entry name" value="Serpin family D member 1"/>
    <property type="match status" value="1"/>
</dbReference>
<dbReference type="Gene3D" id="2.30.39.10">
    <property type="entry name" value="Alpha-1-antitrypsin, domain 1"/>
    <property type="match status" value="1"/>
</dbReference>
<dbReference type="Gene3D" id="3.30.497.10">
    <property type="entry name" value="Antithrombin, subunit I, domain 2"/>
    <property type="match status" value="1"/>
</dbReference>
<dbReference type="InterPro" id="IPR023795">
    <property type="entry name" value="Serpin_CS"/>
</dbReference>
<dbReference type="InterPro" id="IPR023796">
    <property type="entry name" value="Serpin_dom"/>
</dbReference>
<dbReference type="InterPro" id="IPR000215">
    <property type="entry name" value="Serpin_fam"/>
</dbReference>
<dbReference type="InterPro" id="IPR036186">
    <property type="entry name" value="Serpin_sf"/>
</dbReference>
<dbReference type="InterPro" id="IPR042178">
    <property type="entry name" value="Serpin_sf_1"/>
</dbReference>
<dbReference type="InterPro" id="IPR042185">
    <property type="entry name" value="Serpin_sf_2"/>
</dbReference>
<dbReference type="PANTHER" id="PTHR11461:SF34">
    <property type="entry name" value="CORTICOSTEROID-BINDING GLOBULIN"/>
    <property type="match status" value="1"/>
</dbReference>
<dbReference type="PANTHER" id="PTHR11461">
    <property type="entry name" value="SERINE PROTEASE INHIBITOR, SERPIN"/>
    <property type="match status" value="1"/>
</dbReference>
<dbReference type="Pfam" id="PF00079">
    <property type="entry name" value="Serpin"/>
    <property type="match status" value="1"/>
</dbReference>
<dbReference type="PRINTS" id="PR00780">
    <property type="entry name" value="LEUSERPINII"/>
</dbReference>
<dbReference type="SMART" id="SM00093">
    <property type="entry name" value="SERPIN"/>
    <property type="match status" value="1"/>
</dbReference>
<dbReference type="SUPFAM" id="SSF56574">
    <property type="entry name" value="Serpins"/>
    <property type="match status" value="1"/>
</dbReference>
<dbReference type="PROSITE" id="PS00284">
    <property type="entry name" value="SERPIN"/>
    <property type="match status" value="1"/>
</dbReference>
<accession>P08185</accession>
<accession>A8K456</accession>
<accession>Q7Z2Q9</accession>
<gene>
    <name type="primary">SERPINA6</name>
    <name type="synonym">CBG</name>
</gene>
<keyword id="KW-0002">3D-structure</keyword>
<keyword id="KW-0903">Direct protein sequencing</keyword>
<keyword id="KW-0225">Disease variant</keyword>
<keyword id="KW-0325">Glycoprotein</keyword>
<keyword id="KW-0446">Lipid-binding</keyword>
<keyword id="KW-1267">Proteomics identification</keyword>
<keyword id="KW-1185">Reference proteome</keyword>
<keyword id="KW-0964">Secreted</keyword>
<keyword id="KW-0732">Signal</keyword>
<keyword id="KW-0754">Steroid-binding</keyword>
<keyword id="KW-0813">Transport</keyword>
<feature type="signal peptide" evidence="10">
    <location>
        <begin position="1"/>
        <end position="22"/>
    </location>
</feature>
<feature type="chain" id="PRO_0000032429" description="Corticosteroid-binding globulin">
    <location>
        <begin position="23"/>
        <end position="405"/>
    </location>
</feature>
<feature type="binding site" evidence="8 13">
    <location>
        <position position="254"/>
    </location>
    <ligand>
        <name>cortisol</name>
        <dbReference type="ChEBI" id="CHEBI:17650"/>
    </ligand>
</feature>
<feature type="binding site" evidence="8 13">
    <location>
        <position position="286"/>
    </location>
    <ligand>
        <name>cortisol</name>
        <dbReference type="ChEBI" id="CHEBI:17650"/>
    </ligand>
</feature>
<feature type="binding site" evidence="8 13">
    <location>
        <position position="390"/>
    </location>
    <ligand>
        <name>cortisol</name>
        <dbReference type="ChEBI" id="CHEBI:17650"/>
    </ligand>
</feature>
<feature type="binding site">
    <location>
        <position position="393"/>
    </location>
    <ligand>
        <name>cortisol</name>
        <dbReference type="ChEBI" id="CHEBI:17650"/>
    </ligand>
</feature>
<feature type="site" description="Conserved cysteine within steroid binding domain">
    <location>
        <position position="250"/>
    </location>
</feature>
<feature type="glycosylation site" description="N-linked (GlcNAc...) asparagine" evidence="6">
    <location>
        <position position="31"/>
    </location>
</feature>
<feature type="glycosylation site" description="N-linked (GlcNAc...) asparagine" evidence="3 6 9">
    <location>
        <position position="96"/>
    </location>
</feature>
<feature type="glycosylation site" description="N-linked (GlcNAc...) asparagine" evidence="1">
    <location>
        <position position="176"/>
    </location>
</feature>
<feature type="glycosylation site" description="N-linked (GlcNAc...) asparagine">
    <location>
        <position position="260"/>
    </location>
</feature>
<feature type="glycosylation site" description="N-linked (GlcNAc...) asparagine" evidence="6 9">
    <location>
        <position position="330"/>
    </location>
</feature>
<feature type="glycosylation site" description="N-linked (GlcNAc...) asparagine" evidence="6">
    <location>
        <position position="369"/>
    </location>
</feature>
<feature type="sequence variant" id="VAR_007111" description="In CBG deficiency; Leuven; decreased cortisol-binding affinity; dbSNP:rs113418909." evidence="4 11">
    <original>L</original>
    <variation>H</variation>
    <location>
        <position position="115"/>
    </location>
</feature>
<feature type="sequence variant" id="VAR_024350" description="In dbSNP:rs2228541." evidence="5">
    <original>S</original>
    <variation>A</variation>
    <location>
        <position position="246"/>
    </location>
</feature>
<feature type="sequence variant" id="VAR_016223" description="In CBG deficiency; Lyon; decreased cortisol-binding affinity; dbSNP:rs28929488." evidence="2 7">
    <original>D</original>
    <variation>N</variation>
    <location>
        <position position="389"/>
    </location>
</feature>
<feature type="helix" evidence="16">
    <location>
        <begin position="39"/>
        <end position="57"/>
    </location>
</feature>
<feature type="strand" evidence="14">
    <location>
        <begin position="59"/>
        <end position="61"/>
    </location>
</feature>
<feature type="strand" evidence="16">
    <location>
        <begin position="63"/>
        <end position="65"/>
    </location>
</feature>
<feature type="helix" evidence="16">
    <location>
        <begin position="67"/>
        <end position="78"/>
    </location>
</feature>
<feature type="helix" evidence="16">
    <location>
        <begin position="83"/>
        <end position="92"/>
    </location>
</feature>
<feature type="turn" evidence="16">
    <location>
        <begin position="97"/>
        <end position="99"/>
    </location>
</feature>
<feature type="helix" evidence="16">
    <location>
        <begin position="102"/>
        <end position="117"/>
    </location>
</feature>
<feature type="helix" evidence="17">
    <location>
        <begin position="119"/>
        <end position="122"/>
    </location>
</feature>
<feature type="strand" evidence="16">
    <location>
        <begin position="123"/>
        <end position="134"/>
    </location>
</feature>
<feature type="helix" evidence="16">
    <location>
        <begin position="141"/>
        <end position="151"/>
    </location>
</feature>
<feature type="strand" evidence="16">
    <location>
        <begin position="154"/>
        <end position="158"/>
    </location>
</feature>
<feature type="helix" evidence="16">
    <location>
        <begin position="163"/>
        <end position="177"/>
    </location>
</feature>
<feature type="turn" evidence="16">
    <location>
        <begin position="178"/>
        <end position="180"/>
    </location>
</feature>
<feature type="strand" evidence="15">
    <location>
        <begin position="188"/>
        <end position="190"/>
    </location>
</feature>
<feature type="strand" evidence="16">
    <location>
        <begin position="194"/>
        <end position="209"/>
    </location>
</feature>
<feature type="helix" evidence="16">
    <location>
        <begin position="213"/>
        <end position="215"/>
    </location>
</feature>
<feature type="strand" evidence="16">
    <location>
        <begin position="217"/>
        <end position="224"/>
    </location>
</feature>
<feature type="strand" evidence="16">
    <location>
        <begin position="227"/>
        <end position="244"/>
    </location>
</feature>
<feature type="strand" evidence="16">
    <location>
        <begin position="246"/>
        <end position="257"/>
    </location>
</feature>
<feature type="turn" evidence="16">
    <location>
        <begin position="258"/>
        <end position="260"/>
    </location>
</feature>
<feature type="strand" evidence="16">
    <location>
        <begin position="261"/>
        <end position="268"/>
    </location>
</feature>
<feature type="helix" evidence="16">
    <location>
        <begin position="273"/>
        <end position="279"/>
    </location>
</feature>
<feature type="helix" evidence="16">
    <location>
        <begin position="282"/>
        <end position="291"/>
    </location>
</feature>
<feature type="strand" evidence="16">
    <location>
        <begin position="293"/>
        <end position="302"/>
    </location>
</feature>
<feature type="strand" evidence="16">
    <location>
        <begin position="304"/>
        <end position="311"/>
    </location>
</feature>
<feature type="helix" evidence="16">
    <location>
        <begin position="313"/>
        <end position="318"/>
    </location>
</feature>
<feature type="helix" evidence="16">
    <location>
        <begin position="323"/>
        <end position="325"/>
    </location>
</feature>
<feature type="turn" evidence="16">
    <location>
        <begin position="332"/>
        <end position="334"/>
    </location>
</feature>
<feature type="strand" evidence="16">
    <location>
        <begin position="336"/>
        <end position="338"/>
    </location>
</feature>
<feature type="strand" evidence="16">
    <location>
        <begin position="340"/>
        <end position="353"/>
    </location>
</feature>
<feature type="strand" evidence="16">
    <location>
        <begin position="355"/>
        <end position="370"/>
    </location>
</feature>
<feature type="strand" evidence="16">
    <location>
        <begin position="375"/>
        <end position="378"/>
    </location>
</feature>
<feature type="strand" evidence="16">
    <location>
        <begin position="383"/>
        <end position="389"/>
    </location>
</feature>
<feature type="turn" evidence="16">
    <location>
        <begin position="390"/>
        <end position="393"/>
    </location>
</feature>
<feature type="strand" evidence="16">
    <location>
        <begin position="394"/>
        <end position="402"/>
    </location>
</feature>
<sequence>MPLLLYTCLLWLPTSGLWTVQAMDPNAAYVNMSNHHRGLASANVDFAFSLYKHLVALSPKKNIFISPVSISMALAMLSLGTCGHTRAQLLQGLGFNLTERSETEIHQGFQHLHQLFAKSDTSLEMTMGNALFLDGSLELLESFSADIKHYYESEVLAMNFQDWATASRQINSYVKNKTQGKIVDLFSGLDSPAILVLVNYIFFKGTWTQPFDLASTREENFYVDETTVVKVPMMLQSSTISYLHDSELPCQLVQMNYVGNGTVFFILPDKGKMNTVIAALSRDTINRWSAGLTSSQVDLYIPKVTISGVYDLGDVLEEMGIADLFTNQANFSRITQDAQLKSSKVVHKAVLQLNEEGVDTAGSTGVTLNLTSKPIILRFNQPFIIMIFDHFTWSSLFLARVMNPV</sequence>
<reference key="1">
    <citation type="journal article" date="1987" name="Proc. Natl. Acad. Sci. U.S.A.">
        <title>Primary structure of human corticosteroid binding globulin, deduced from hepatic and pulmonary cDNAs, exhibits homology with serine protease inhibitors.</title>
        <authorList>
            <person name="Hammond G.L."/>
            <person name="Smith C.L."/>
            <person name="Goping I.S."/>
            <person name="Underhill D.A."/>
            <person name="Harley M.J."/>
            <person name="Reventos J."/>
            <person name="Musto N.A."/>
            <person name="Gunsalus G.L."/>
            <person name="Bardin C.W."/>
        </authorList>
    </citation>
    <scope>NUCLEOTIDE SEQUENCE [MRNA]</scope>
    <source>
        <tissue>Liver</tissue>
        <tissue>Lung</tissue>
    </source>
</reference>
<reference key="2">
    <citation type="journal article" date="1988" name="J. Steroid Biochem.">
        <title>Corticosteroid binding globulin, testosterone-estradiol binding globulin, and androgen binding protein belong to protein families distinct from steroid receptors.</title>
        <authorList>
            <person name="Bardin C.W."/>
            <person name="Gunsalus G.L."/>
            <person name="Musto N.A."/>
            <person name="Cheng C.Y."/>
            <person name="Reventos J."/>
            <person name="Smith C."/>
            <person name="Underhill D.A."/>
            <person name="Hammond G."/>
        </authorList>
    </citation>
    <scope>NUCLEOTIDE SEQUENCE [MRNA]</scope>
</reference>
<reference key="3">
    <citation type="journal article" date="2004" name="Nat. Genet.">
        <title>Complete sequencing and characterization of 21,243 full-length human cDNAs.</title>
        <authorList>
            <person name="Ota T."/>
            <person name="Suzuki Y."/>
            <person name="Nishikawa T."/>
            <person name="Otsuki T."/>
            <person name="Sugiyama T."/>
            <person name="Irie R."/>
            <person name="Wakamatsu A."/>
            <person name="Hayashi K."/>
            <person name="Sato H."/>
            <person name="Nagai K."/>
            <person name="Kimura K."/>
            <person name="Makita H."/>
            <person name="Sekine M."/>
            <person name="Obayashi M."/>
            <person name="Nishi T."/>
            <person name="Shibahara T."/>
            <person name="Tanaka T."/>
            <person name="Ishii S."/>
            <person name="Yamamoto J."/>
            <person name="Saito K."/>
            <person name="Kawai Y."/>
            <person name="Isono Y."/>
            <person name="Nakamura Y."/>
            <person name="Nagahari K."/>
            <person name="Murakami K."/>
            <person name="Yasuda T."/>
            <person name="Iwayanagi T."/>
            <person name="Wagatsuma M."/>
            <person name="Shiratori A."/>
            <person name="Sudo H."/>
            <person name="Hosoiri T."/>
            <person name="Kaku Y."/>
            <person name="Kodaira H."/>
            <person name="Kondo H."/>
            <person name="Sugawara M."/>
            <person name="Takahashi M."/>
            <person name="Kanda K."/>
            <person name="Yokoi T."/>
            <person name="Furuya T."/>
            <person name="Kikkawa E."/>
            <person name="Omura Y."/>
            <person name="Abe K."/>
            <person name="Kamihara K."/>
            <person name="Katsuta N."/>
            <person name="Sato K."/>
            <person name="Tanikawa M."/>
            <person name="Yamazaki M."/>
            <person name="Ninomiya K."/>
            <person name="Ishibashi T."/>
            <person name="Yamashita H."/>
            <person name="Murakawa K."/>
            <person name="Fujimori K."/>
            <person name="Tanai H."/>
            <person name="Kimata M."/>
            <person name="Watanabe M."/>
            <person name="Hiraoka S."/>
            <person name="Chiba Y."/>
            <person name="Ishida S."/>
            <person name="Ono Y."/>
            <person name="Takiguchi S."/>
            <person name="Watanabe S."/>
            <person name="Yosida M."/>
            <person name="Hotuta T."/>
            <person name="Kusano J."/>
            <person name="Kanehori K."/>
            <person name="Takahashi-Fujii A."/>
            <person name="Hara H."/>
            <person name="Tanase T.-O."/>
            <person name="Nomura Y."/>
            <person name="Togiya S."/>
            <person name="Komai F."/>
            <person name="Hara R."/>
            <person name="Takeuchi K."/>
            <person name="Arita M."/>
            <person name="Imose N."/>
            <person name="Musashino K."/>
            <person name="Yuuki H."/>
            <person name="Oshima A."/>
            <person name="Sasaki N."/>
            <person name="Aotsuka S."/>
            <person name="Yoshikawa Y."/>
            <person name="Matsunawa H."/>
            <person name="Ichihara T."/>
            <person name="Shiohata N."/>
            <person name="Sano S."/>
            <person name="Moriya S."/>
            <person name="Momiyama H."/>
            <person name="Satoh N."/>
            <person name="Takami S."/>
            <person name="Terashima Y."/>
            <person name="Suzuki O."/>
            <person name="Nakagawa S."/>
            <person name="Senoh A."/>
            <person name="Mizoguchi H."/>
            <person name="Goto Y."/>
            <person name="Shimizu F."/>
            <person name="Wakebe H."/>
            <person name="Hishigaki H."/>
            <person name="Watanabe T."/>
            <person name="Sugiyama A."/>
            <person name="Takemoto M."/>
            <person name="Kawakami B."/>
            <person name="Yamazaki M."/>
            <person name="Watanabe K."/>
            <person name="Kumagai A."/>
            <person name="Itakura S."/>
            <person name="Fukuzumi Y."/>
            <person name="Fujimori Y."/>
            <person name="Komiyama M."/>
            <person name="Tashiro H."/>
            <person name="Tanigami A."/>
            <person name="Fujiwara T."/>
            <person name="Ono T."/>
            <person name="Yamada K."/>
            <person name="Fujii Y."/>
            <person name="Ozaki K."/>
            <person name="Hirao M."/>
            <person name="Ohmori Y."/>
            <person name="Kawabata A."/>
            <person name="Hikiji T."/>
            <person name="Kobatake N."/>
            <person name="Inagaki H."/>
            <person name="Ikema Y."/>
            <person name="Okamoto S."/>
            <person name="Okitani R."/>
            <person name="Kawakami T."/>
            <person name="Noguchi S."/>
            <person name="Itoh T."/>
            <person name="Shigeta K."/>
            <person name="Senba T."/>
            <person name="Matsumura K."/>
            <person name="Nakajima Y."/>
            <person name="Mizuno T."/>
            <person name="Morinaga M."/>
            <person name="Sasaki M."/>
            <person name="Togashi T."/>
            <person name="Oyama M."/>
            <person name="Hata H."/>
            <person name="Watanabe M."/>
            <person name="Komatsu T."/>
            <person name="Mizushima-Sugano J."/>
            <person name="Satoh T."/>
            <person name="Shirai Y."/>
            <person name="Takahashi Y."/>
            <person name="Nakagawa K."/>
            <person name="Okumura K."/>
            <person name="Nagase T."/>
            <person name="Nomura N."/>
            <person name="Kikuchi H."/>
            <person name="Masuho Y."/>
            <person name="Yamashita R."/>
            <person name="Nakai K."/>
            <person name="Yada T."/>
            <person name="Nakamura Y."/>
            <person name="Ohara O."/>
            <person name="Isogai T."/>
            <person name="Sugano S."/>
        </authorList>
    </citation>
    <scope>NUCLEOTIDE SEQUENCE [LARGE SCALE MRNA]</scope>
    <source>
        <tissue>Liver</tissue>
    </source>
</reference>
<reference key="4">
    <citation type="submission" date="2005-07" db="EMBL/GenBank/DDBJ databases">
        <authorList>
            <person name="Mural R.J."/>
            <person name="Istrail S."/>
            <person name="Sutton G.G."/>
            <person name="Florea L."/>
            <person name="Halpern A.L."/>
            <person name="Mobarry C.M."/>
            <person name="Lippert R."/>
            <person name="Walenz B."/>
            <person name="Shatkay H."/>
            <person name="Dew I."/>
            <person name="Miller J.R."/>
            <person name="Flanigan M.J."/>
            <person name="Edwards N.J."/>
            <person name="Bolanos R."/>
            <person name="Fasulo D."/>
            <person name="Halldorsson B.V."/>
            <person name="Hannenhalli S."/>
            <person name="Turner R."/>
            <person name="Yooseph S."/>
            <person name="Lu F."/>
            <person name="Nusskern D.R."/>
            <person name="Shue B.C."/>
            <person name="Zheng X.H."/>
            <person name="Zhong F."/>
            <person name="Delcher A.L."/>
            <person name="Huson D.H."/>
            <person name="Kravitz S.A."/>
            <person name="Mouchard L."/>
            <person name="Reinert K."/>
            <person name="Remington K.A."/>
            <person name="Clark A.G."/>
            <person name="Waterman M.S."/>
            <person name="Eichler E.E."/>
            <person name="Adams M.D."/>
            <person name="Hunkapiller M.W."/>
            <person name="Myers E.W."/>
            <person name="Venter J.C."/>
        </authorList>
    </citation>
    <scope>NUCLEOTIDE SEQUENCE [LARGE SCALE GENOMIC DNA]</scope>
</reference>
<reference key="5">
    <citation type="journal article" date="2004" name="Genome Res.">
        <title>The status, quality, and expansion of the NIH full-length cDNA project: the Mammalian Gene Collection (MGC).</title>
        <authorList>
            <consortium name="The MGC Project Team"/>
        </authorList>
    </citation>
    <scope>NUCLEOTIDE SEQUENCE [LARGE SCALE MRNA]</scope>
    <scope>VARIANT ALA-246</scope>
</reference>
<reference key="6">
    <citation type="journal article" date="1988" name="J. Steroid Biochem.">
        <title>Comparative structural analyses of corticosteroid binding globulin.</title>
        <authorList>
            <person name="Kato E.A."/>
            <person name="Hsu B.R.-S."/>
            <person name="Kuhn R.W."/>
        </authorList>
    </citation>
    <scope>PROTEIN SEQUENCE OF 23-30</scope>
</reference>
<reference key="7">
    <citation type="journal article" date="2004" name="Proteomics">
        <title>Screening for N-glycosylated proteins by liquid chromatography mass spectrometry.</title>
        <authorList>
            <person name="Bunkenborg J."/>
            <person name="Pilch B.J."/>
            <person name="Podtelejnikov A.V."/>
            <person name="Wisniewski J.R."/>
        </authorList>
    </citation>
    <scope>GLYCOSYLATION [LARGE SCALE ANALYSIS] AT ASN-96</scope>
    <source>
        <tissue>Plasma</tissue>
    </source>
</reference>
<reference key="8">
    <citation type="journal article" date="2005" name="J. Proteome Res.">
        <title>Human plasma N-glycoproteome analysis by immunoaffinity subtraction, hydrazide chemistry, and mass spectrometry.</title>
        <authorList>
            <person name="Liu T."/>
            <person name="Qian W.-J."/>
            <person name="Gritsenko M.A."/>
            <person name="Camp D.G. II"/>
            <person name="Monroe M.E."/>
            <person name="Moore R.J."/>
            <person name="Smith R.D."/>
        </authorList>
    </citation>
    <scope>GLYCOSYLATION [LARGE SCALE ANALYSIS] AT ASN-31; ASN-96; ASN-330 AND ASN-369</scope>
    <source>
        <tissue>Plasma</tissue>
    </source>
</reference>
<reference key="9">
    <citation type="journal article" date="2009" name="J. Proteome Res.">
        <title>Glycoproteomics analysis of human liver tissue by combination of multiple enzyme digestion and hydrazide chemistry.</title>
        <authorList>
            <person name="Chen R."/>
            <person name="Jiang X."/>
            <person name="Sun D."/>
            <person name="Han G."/>
            <person name="Wang F."/>
            <person name="Ye M."/>
            <person name="Wang L."/>
            <person name="Zou H."/>
        </authorList>
    </citation>
    <scope>GLYCOSYLATION [LARGE SCALE ANALYSIS] AT ASN-96 AND ASN-330</scope>
    <source>
        <tissue>Liver</tissue>
    </source>
</reference>
<reference key="10">
    <citation type="journal article" date="2008" name="J. Mol. Biol.">
        <title>The S-to-R transition of corticosteroid-binding globulin and the mechanism of hormone release.</title>
        <authorList>
            <person name="Zhou A."/>
            <person name="Wei Z."/>
            <person name="Stanley P.L."/>
            <person name="Read R.J."/>
            <person name="Stein P.E."/>
            <person name="Carrell R.W."/>
        </authorList>
    </citation>
    <scope>X-RAY CRYSTALLOGRAPHY (1.84 ANGSTROMS) OF 33-405 IN COMPLEX WITH CORTISOL</scope>
    <scope>FUNCTION</scope>
    <scope>DOMAIN</scope>
</reference>
<reference key="11">
    <citation type="journal article" date="1992" name="J. Steroid Biochem. Mol. Biol.">
        <title>A Leu--&gt;His substitution at residue 93 in human corticosteroid binding globulin results in reduced affinity for cortisol.</title>
        <authorList>
            <person name="Smith C.L."/>
            <person name="Power S.G.A."/>
            <person name="Hammond G.L."/>
        </authorList>
    </citation>
    <scope>VARIANT CBG DEFICIENCY HIS-115</scope>
</reference>
<reference key="12">
    <citation type="journal article" date="1993" name="Steroids">
        <title>Decreased cortisol-binding affinity of transcortin Leuven is associated with an amino acid substitution at residue-93.</title>
        <authorList>
            <person name="van Baelen H."/>
            <person name="Power S.G.A."/>
            <person name="Hammond G.L."/>
        </authorList>
    </citation>
    <scope>VARIANT CBG DEFICIENCY HIS-115</scope>
</reference>
<reference key="13">
    <citation type="journal article" date="2000" name="J. Clin. Endocrinol. Metab.">
        <title>Novel human corticosteroid-binding globulin variant with low cortisol-binding affinity.</title>
        <authorList>
            <person name="Emptoz-Bonneton A."/>
            <person name="Cousin P."/>
            <person name="Seguchi K."/>
            <person name="Avvakumov G.V."/>
            <person name="Bully C."/>
            <person name="Hammond G.L."/>
            <person name="Pugeat M."/>
        </authorList>
    </citation>
    <scope>VARIANT CBG DEFICIENCY ASN-389</scope>
</reference>
<reference key="14">
    <citation type="journal article" date="2007" name="J. Neural Transm.">
        <title>Haploinsufficiency of the SERPINA6 gene is associated with severe muscle fatigue: A de novo mutation in corticosteroid-binding globulin deficiency.</title>
        <authorList>
            <person name="Buss C."/>
            <person name="Schuelter U."/>
            <person name="Hesse J."/>
            <person name="Moser D."/>
            <person name="Phillips D.I."/>
            <person name="Hellhammer D."/>
            <person name="Meyer J."/>
        </authorList>
    </citation>
    <scope>VARIANT CBG DEFICIENCY ASN-389</scope>
</reference>
<proteinExistence type="evidence at protein level"/>
<protein>
    <recommendedName>
        <fullName>Corticosteroid-binding globulin</fullName>
        <shortName>CBG</shortName>
    </recommendedName>
    <alternativeName>
        <fullName>Serpin A6</fullName>
    </alternativeName>
    <alternativeName>
        <fullName>Transcortin</fullName>
    </alternativeName>
</protein>